<evidence type="ECO:0000255" key="1"/>
<evidence type="ECO:0000255" key="2">
    <source>
        <dbReference type="PROSITE-ProRule" id="PRU00117"/>
    </source>
</evidence>
<evidence type="ECO:0000255" key="3">
    <source>
        <dbReference type="PROSITE-ProRule" id="PRU00211"/>
    </source>
</evidence>
<evidence type="ECO:0000256" key="4">
    <source>
        <dbReference type="SAM" id="MobiDB-lite"/>
    </source>
</evidence>
<evidence type="ECO:0000269" key="5">
    <source>
    </source>
</evidence>
<evidence type="ECO:0000269" key="6">
    <source>
    </source>
</evidence>
<evidence type="ECO:0000303" key="7">
    <source>
    </source>
</evidence>
<evidence type="ECO:0000303" key="8">
    <source>
    </source>
</evidence>
<evidence type="ECO:0000305" key="9"/>
<evidence type="ECO:0000305" key="10">
    <source>
    </source>
</evidence>
<evidence type="ECO:0007829" key="11">
    <source>
        <dbReference type="PDB" id="5VQH"/>
    </source>
</evidence>
<reference key="1">
    <citation type="journal article" date="2008" name="Insect Biochem. Mol. Biol.">
        <title>The genome of a lepidopteran model insect, the silkworm Bombyx mori.</title>
        <authorList>
            <consortium name="International Silkworm Genome Consortium"/>
        </authorList>
    </citation>
    <scope>NUCLEOTIDE SEQUENCE [LARGE SCALE GENOMIC DNA]</scope>
    <source>
        <strain>p50T</strain>
    </source>
</reference>
<reference key="2">
    <citation type="journal article" date="2013" name="RNA">
        <title>Mitochondrial protein BmPAPI modulates the length of mature piRNAs.</title>
        <authorList>
            <person name="Honda S."/>
            <person name="Kirino Y."/>
            <person name="Maragkakis M."/>
            <person name="Alexiou P."/>
            <person name="Ohtaki A."/>
            <person name="Murali R."/>
            <person name="Mourelatos Z."/>
            <person name="Kirino Y."/>
        </authorList>
    </citation>
    <scope>FUNCTION</scope>
    <scope>SUBCELLULAR LOCATION</scope>
    <scope>INTERACTION WITH SIWI AND AGO3</scope>
    <scope>DOMAIN</scope>
</reference>
<reference key="3">
    <citation type="journal article" date="2016" name="Cell">
        <title>Identification and functional analysis of the pre-piRNA 3' trimmer in silkworms.</title>
        <authorList>
            <person name="Izumi N."/>
            <person name="Shoji K."/>
            <person name="Sakaguchi Y."/>
            <person name="Honda S."/>
            <person name="Kirino Y."/>
            <person name="Suzuki T."/>
            <person name="Katsuma S."/>
            <person name="Tomari Y."/>
        </authorList>
    </citation>
    <scope>FUNCTION</scope>
    <scope>INTERACTION WITH SIWI AND PNLDC1</scope>
    <scope>DOMAIN</scope>
    <scope>MUTAGENESIS OF ILE-69 AND VAL-142</scope>
</reference>
<accession>H9JD76</accession>
<dbReference type="EMBL" id="BABH01036235">
    <property type="status" value="NOT_ANNOTATED_CDS"/>
    <property type="molecule type" value="Genomic_DNA"/>
</dbReference>
<dbReference type="EMBL" id="BABH01036236">
    <property type="status" value="NOT_ANNOTATED_CDS"/>
    <property type="molecule type" value="Genomic_DNA"/>
</dbReference>
<dbReference type="EMBL" id="BABH01036237">
    <property type="status" value="NOT_ANNOTATED_CDS"/>
    <property type="molecule type" value="Genomic_DNA"/>
</dbReference>
<dbReference type="EMBL" id="BABH01036238">
    <property type="status" value="NOT_ANNOTATED_CDS"/>
    <property type="molecule type" value="Genomic_DNA"/>
</dbReference>
<dbReference type="PDB" id="5VQG">
    <property type="method" value="X-ray"/>
    <property type="resolution" value="2.60 A"/>
    <property type="chains" value="A=245-462"/>
</dbReference>
<dbReference type="PDB" id="5VQH">
    <property type="method" value="X-ray"/>
    <property type="resolution" value="2.40 A"/>
    <property type="chains" value="A/B=245-462"/>
</dbReference>
<dbReference type="PDB" id="5VY1">
    <property type="method" value="X-ray"/>
    <property type="resolution" value="3.05 A"/>
    <property type="chains" value="A/B=245-462"/>
</dbReference>
<dbReference type="PDBsum" id="5VQG"/>
<dbReference type="PDBsum" id="5VQH"/>
<dbReference type="PDBsum" id="5VY1"/>
<dbReference type="SMR" id="H9JD76"/>
<dbReference type="FunCoup" id="H9JD76">
    <property type="interactions" value="84"/>
</dbReference>
<dbReference type="STRING" id="7091.H9JD76"/>
<dbReference type="HOGENOM" id="CLU_023629_0_1_1"/>
<dbReference type="InParanoid" id="H9JD76"/>
<dbReference type="Proteomes" id="UP000005204">
    <property type="component" value="Unassembled WGS sequence"/>
</dbReference>
<dbReference type="GO" id="GO:0005741">
    <property type="term" value="C:mitochondrial outer membrane"/>
    <property type="evidence" value="ECO:0000314"/>
    <property type="project" value="UniProtKB"/>
</dbReference>
<dbReference type="GO" id="GO:0043186">
    <property type="term" value="C:P granule"/>
    <property type="evidence" value="ECO:0007669"/>
    <property type="project" value="TreeGrafter"/>
</dbReference>
<dbReference type="GO" id="GO:0003723">
    <property type="term" value="F:RNA binding"/>
    <property type="evidence" value="ECO:0007669"/>
    <property type="project" value="UniProtKB-KW"/>
</dbReference>
<dbReference type="GO" id="GO:0030719">
    <property type="term" value="P:P granule organization"/>
    <property type="evidence" value="ECO:0007669"/>
    <property type="project" value="TreeGrafter"/>
</dbReference>
<dbReference type="GO" id="GO:0034587">
    <property type="term" value="P:piRNA processing"/>
    <property type="evidence" value="ECO:0000314"/>
    <property type="project" value="UniProtKB"/>
</dbReference>
<dbReference type="GO" id="GO:0007283">
    <property type="term" value="P:spermatogenesis"/>
    <property type="evidence" value="ECO:0007669"/>
    <property type="project" value="UniProtKB-KW"/>
</dbReference>
<dbReference type="CDD" id="cd00105">
    <property type="entry name" value="KH-I"/>
    <property type="match status" value="1"/>
</dbReference>
<dbReference type="CDD" id="cd20412">
    <property type="entry name" value="Tudor_TDRD2"/>
    <property type="match status" value="1"/>
</dbReference>
<dbReference type="Gene3D" id="2.30.30.140">
    <property type="match status" value="1"/>
</dbReference>
<dbReference type="Gene3D" id="2.40.50.90">
    <property type="match status" value="1"/>
</dbReference>
<dbReference type="Gene3D" id="3.30.1370.10">
    <property type="entry name" value="K Homology domain, type 1"/>
    <property type="match status" value="2"/>
</dbReference>
<dbReference type="InterPro" id="IPR004087">
    <property type="entry name" value="KH_dom"/>
</dbReference>
<dbReference type="InterPro" id="IPR004088">
    <property type="entry name" value="KH_dom_type_1"/>
</dbReference>
<dbReference type="InterPro" id="IPR036612">
    <property type="entry name" value="KH_dom_type_1_sf"/>
</dbReference>
<dbReference type="InterPro" id="IPR035437">
    <property type="entry name" value="SNase_OB-fold_sf"/>
</dbReference>
<dbReference type="InterPro" id="IPR047380">
    <property type="entry name" value="TDRD2-like_tudor"/>
</dbReference>
<dbReference type="InterPro" id="IPR002999">
    <property type="entry name" value="Tudor"/>
</dbReference>
<dbReference type="InterPro" id="IPR050621">
    <property type="entry name" value="Tudor_domain_containing"/>
</dbReference>
<dbReference type="PANTHER" id="PTHR22948:SF29">
    <property type="entry name" value="FI02030P-RELATED"/>
    <property type="match status" value="1"/>
</dbReference>
<dbReference type="PANTHER" id="PTHR22948">
    <property type="entry name" value="TUDOR DOMAIN CONTAINING PROTEIN"/>
    <property type="match status" value="1"/>
</dbReference>
<dbReference type="Pfam" id="PF00013">
    <property type="entry name" value="KH_1"/>
    <property type="match status" value="2"/>
</dbReference>
<dbReference type="Pfam" id="PF00567">
    <property type="entry name" value="TUDOR"/>
    <property type="match status" value="1"/>
</dbReference>
<dbReference type="SMART" id="SM00322">
    <property type="entry name" value="KH"/>
    <property type="match status" value="2"/>
</dbReference>
<dbReference type="SMART" id="SM00333">
    <property type="entry name" value="TUDOR"/>
    <property type="match status" value="1"/>
</dbReference>
<dbReference type="SUPFAM" id="SSF54791">
    <property type="entry name" value="Eukaryotic type KH-domain (KH-domain type I)"/>
    <property type="match status" value="2"/>
</dbReference>
<dbReference type="SUPFAM" id="SSF63748">
    <property type="entry name" value="Tudor/PWWP/MBT"/>
    <property type="match status" value="1"/>
</dbReference>
<dbReference type="PROSITE" id="PS50084">
    <property type="entry name" value="KH_TYPE_1"/>
    <property type="match status" value="2"/>
</dbReference>
<dbReference type="PROSITE" id="PS50304">
    <property type="entry name" value="TUDOR"/>
    <property type="match status" value="1"/>
</dbReference>
<protein>
    <recommendedName>
        <fullName evidence="9">Tudor and KH domain-containing protein homolog</fullName>
    </recommendedName>
    <alternativeName>
        <fullName evidence="7">Partner of PIWIs protein</fullName>
        <shortName evidence="7 8">BmPAPI</shortName>
    </alternativeName>
</protein>
<sequence length="629" mass="69543">MSLNTKLALPIALGLSLVTVTAFVAYYVLKRDEEENDNKTVKITKINTIEIHVPKSIVPALIGRNGSNIKDLQKKSGAQIHFKKFTDQDYDVCVVRGRADTTQLAETLIHDFIKQQPTIMSESITVPSWSCGRIIGSGGENVNDISHRSGARVKVESPKSTDKVAEHLVTFRGTKEQIEVAKKLVENCVSLERCRREIEQSKRPPRHSSSPPSPCPSPGDRDADADAQGDVDHTRVKYKRPETTGPSIEVYVSAVSSPSRFWVQFVGPQVAQLDDLVAHMTEYYSKKENREAHTLRHVSVGQVVAAVFRHDGRWYRARVHDIRPNEFDSSQQVADVFYLDYGDSEYVATHELCELRADLLRLRFQAMECFLAGVRPASGEEAVSPSGQTWDKWHPQAVERFEELTQVARWKALVSRTCTYKKTATAEGEKDKEIPGIKLFDVTDEGELDVGAVLVAEGWAVAGPAPSPRPSPPRGHTTPFGDLSKSKVLSMTGGGGRSSSVPKDHKDDGSNVLTVEGDDSKDKDGITASKSLASGLEKSDRHPLSISNFDLSYPDPSRNKQLNGSDDFLHGERQNIDNEITIDTLVPPSPLSNAPILSKTLQDEFKANMNRIDSHHSNLENLGKSAFEK</sequence>
<keyword id="KW-0002">3D-structure</keyword>
<keyword id="KW-0221">Differentiation</keyword>
<keyword id="KW-0472">Membrane</keyword>
<keyword id="KW-0496">Mitochondrion</keyword>
<keyword id="KW-1000">Mitochondrion outer membrane</keyword>
<keyword id="KW-1185">Reference proteome</keyword>
<keyword id="KW-0677">Repeat</keyword>
<keyword id="KW-0694">RNA-binding</keyword>
<keyword id="KW-0943">RNA-mediated gene silencing</keyword>
<keyword id="KW-0744">Spermatogenesis</keyword>
<keyword id="KW-0812">Transmembrane</keyword>
<keyword id="KW-1133">Transmembrane helix</keyword>
<comment type="function">
    <text evidence="5 6">Participates in the primary piRNA biogenesis pathway and is required during spermatogenesis to repress transposable elements and prevent their mobilization, which is essential for the germline integrity (PubMed:23970546, PubMed:26919431). The piRNA metabolic process mediates the repression of transposable elements during meiosis by forming complexes composed of piRNAs and Piwi proteins (Siwi or Ago3) and govern the methylation and subsequent repression of transposons (PubMed:23970546, PubMed:26919431). Required for the final steps of primary piRNA biogenesis by participating in the processing of 31-37 nt intermediates into mature piRNAs: acts by recruiting the exonuclease PNLDC1/trimmer to Siwi-bound pre-piRNAs (PubMed:26919431).</text>
</comment>
<comment type="subunit">
    <text evidence="5 6">Interacts with (symmetrically methylated) Siwi (PubMed:23970546, PubMed:26919431). Interacts with (symmetrically methylated) Ago3 (PubMed:23970546). Interacts with PNLDC1/trimmer; interaction takes place on the mitochondrial surface and recruits PNLDC1/trimmer to Siwi-bound pre-piRNAs (PubMed:26919431).</text>
</comment>
<comment type="subcellular location">
    <subcellularLocation>
        <location evidence="5">Mitochondrion outer membrane</location>
        <topology evidence="1">Single-pass membrane protein</topology>
    </subcellularLocation>
    <text evidence="5">Localizes to the outer surface of mitochondria.</text>
</comment>
<comment type="domain">
    <text evidence="5 10">The Tudor domain specifically recognizes and binds symmetrically methylated Siwi and Ago3.</text>
</comment>
<comment type="similarity">
    <text evidence="9">Belongs to the Tdrkh family.</text>
</comment>
<organism>
    <name type="scientific">Bombyx mori</name>
    <name type="common">Silk moth</name>
    <dbReference type="NCBI Taxonomy" id="7091"/>
    <lineage>
        <taxon>Eukaryota</taxon>
        <taxon>Metazoa</taxon>
        <taxon>Ecdysozoa</taxon>
        <taxon>Arthropoda</taxon>
        <taxon>Hexapoda</taxon>
        <taxon>Insecta</taxon>
        <taxon>Pterygota</taxon>
        <taxon>Neoptera</taxon>
        <taxon>Endopterygota</taxon>
        <taxon>Lepidoptera</taxon>
        <taxon>Glossata</taxon>
        <taxon>Ditrysia</taxon>
        <taxon>Bombycoidea</taxon>
        <taxon>Bombycidae</taxon>
        <taxon>Bombycinae</taxon>
        <taxon>Bombyx</taxon>
    </lineage>
</organism>
<proteinExistence type="evidence at protein level"/>
<gene>
    <name evidence="7" type="primary">PAPI</name>
</gene>
<name>TDRKH_BOMMO</name>
<feature type="chain" id="PRO_0000439350" description="Tudor and KH domain-containing protein homolog">
    <location>
        <begin position="1"/>
        <end position="629"/>
    </location>
</feature>
<feature type="transmembrane region" description="Helical" evidence="1">
    <location>
        <begin position="9"/>
        <end position="29"/>
    </location>
</feature>
<feature type="domain" description="KH 1" evidence="2">
    <location>
        <begin position="46"/>
        <end position="109"/>
    </location>
</feature>
<feature type="domain" description="KH 2" evidence="2">
    <location>
        <begin position="119"/>
        <end position="185"/>
    </location>
</feature>
<feature type="domain" description="Tudor" evidence="3">
    <location>
        <begin position="297"/>
        <end position="362"/>
    </location>
</feature>
<feature type="region of interest" description="Disordered" evidence="4">
    <location>
        <begin position="198"/>
        <end position="240"/>
    </location>
</feature>
<feature type="region of interest" description="Disordered" evidence="4">
    <location>
        <begin position="464"/>
        <end position="526"/>
    </location>
</feature>
<feature type="compositionally biased region" description="Basic and acidic residues" evidence="4">
    <location>
        <begin position="219"/>
        <end position="240"/>
    </location>
</feature>
<feature type="mutagenesis site" description="Loss of activity; when associated with N-142." evidence="6">
    <original>I</original>
    <variation>N</variation>
    <location>
        <position position="69"/>
    </location>
</feature>
<feature type="mutagenesis site" description="Loss of activity; when associated with N-69." evidence="6">
    <original>V</original>
    <variation>N</variation>
    <location>
        <position position="142"/>
    </location>
</feature>
<feature type="strand" evidence="11">
    <location>
        <begin position="248"/>
        <end position="257"/>
    </location>
</feature>
<feature type="strand" evidence="11">
    <location>
        <begin position="260"/>
        <end position="267"/>
    </location>
</feature>
<feature type="helix" evidence="11">
    <location>
        <begin position="268"/>
        <end position="284"/>
    </location>
</feature>
<feature type="helix" evidence="11">
    <location>
        <begin position="287"/>
        <end position="291"/>
    </location>
</feature>
<feature type="strand" evidence="11">
    <location>
        <begin position="303"/>
        <end position="307"/>
    </location>
</feature>
<feature type="turn" evidence="11">
    <location>
        <begin position="309"/>
        <end position="311"/>
    </location>
</feature>
<feature type="strand" evidence="11">
    <location>
        <begin position="314"/>
        <end position="323"/>
    </location>
</feature>
<feature type="strand" evidence="11">
    <location>
        <begin position="333"/>
        <end position="338"/>
    </location>
</feature>
<feature type="turn" evidence="11">
    <location>
        <begin position="339"/>
        <end position="341"/>
    </location>
</feature>
<feature type="strand" evidence="11">
    <location>
        <begin position="344"/>
        <end position="348"/>
    </location>
</feature>
<feature type="helix" evidence="11">
    <location>
        <begin position="349"/>
        <end position="351"/>
    </location>
</feature>
<feature type="helix" evidence="11">
    <location>
        <begin position="357"/>
        <end position="360"/>
    </location>
</feature>
<feature type="strand" evidence="11">
    <location>
        <begin position="367"/>
        <end position="371"/>
    </location>
</feature>
<feature type="helix" evidence="11">
    <location>
        <begin position="395"/>
        <end position="404"/>
    </location>
</feature>
<feature type="turn" evidence="11">
    <location>
        <begin position="405"/>
        <end position="408"/>
    </location>
</feature>
<feature type="strand" evidence="11">
    <location>
        <begin position="412"/>
        <end position="423"/>
    </location>
</feature>
<feature type="strand" evidence="11">
    <location>
        <begin position="432"/>
        <end position="442"/>
    </location>
</feature>
<feature type="strand" evidence="11">
    <location>
        <begin position="447"/>
        <end position="449"/>
    </location>
</feature>
<feature type="helix" evidence="11">
    <location>
        <begin position="450"/>
        <end position="456"/>
    </location>
</feature>
<feature type="strand" evidence="11">
    <location>
        <begin position="459"/>
        <end position="461"/>
    </location>
</feature>